<feature type="chain" id="PRO_0000278123" description="Mediator of RNA polymerase II transcription subunit 22">
    <location>
        <begin position="1"/>
        <end position="203"/>
    </location>
</feature>
<feature type="region of interest" description="Disordered" evidence="3">
    <location>
        <begin position="164"/>
        <end position="203"/>
    </location>
</feature>
<feature type="coiled-coil region" evidence="2">
    <location>
        <begin position="93"/>
        <end position="123"/>
    </location>
</feature>
<feature type="compositionally biased region" description="Polar residues" evidence="3">
    <location>
        <begin position="164"/>
        <end position="188"/>
    </location>
</feature>
<feature type="splice variant" id="VSP_052316" description="In isoform 2." evidence="5">
    <original>SYS</original>
    <variation>RYK</variation>
    <location>
        <begin position="138"/>
        <end position="140"/>
    </location>
</feature>
<feature type="splice variant" id="VSP_052317" description="In isoform 2." evidence="5">
    <location>
        <begin position="141"/>
        <end position="203"/>
    </location>
</feature>
<keyword id="KW-0010">Activator</keyword>
<keyword id="KW-0025">Alternative splicing</keyword>
<keyword id="KW-0175">Coiled coil</keyword>
<keyword id="KW-0539">Nucleus</keyword>
<keyword id="KW-1185">Reference proteome</keyword>
<keyword id="KW-0804">Transcription</keyword>
<keyword id="KW-0805">Transcription regulation</keyword>
<protein>
    <recommendedName>
        <fullName>Mediator of RNA polymerase II transcription subunit 22</fullName>
    </recommendedName>
    <alternativeName>
        <fullName>Mediator complex subunit 22</fullName>
    </alternativeName>
    <alternativeName>
        <fullName>Surfeit locus protein 5</fullName>
    </alternativeName>
</protein>
<dbReference type="EMBL" id="AB050009">
    <property type="protein sequence ID" value="BAC65167.1"/>
    <property type="molecule type" value="Genomic_DNA"/>
</dbReference>
<dbReference type="EMBL" id="AB050009">
    <property type="protein sequence ID" value="BAC65168.1"/>
    <property type="molecule type" value="Genomic_DNA"/>
</dbReference>
<dbReference type="RefSeq" id="NP_001039295.1">
    <molecule id="Q800L3-2"/>
    <property type="nucleotide sequence ID" value="NM_001045830.3"/>
</dbReference>
<dbReference type="RefSeq" id="NP_001376346.1">
    <molecule id="Q800L3-1"/>
    <property type="nucleotide sequence ID" value="NM_001389417.2"/>
</dbReference>
<dbReference type="RefSeq" id="XP_015134928.1">
    <property type="nucleotide sequence ID" value="XM_015279442.1"/>
</dbReference>
<dbReference type="SMR" id="Q800L3"/>
<dbReference type="FunCoup" id="Q800L3">
    <property type="interactions" value="1392"/>
</dbReference>
<dbReference type="STRING" id="9031.ENSGALP00000005067"/>
<dbReference type="GlyGen" id="Q800L3">
    <property type="glycosylation" value="2 sites"/>
</dbReference>
<dbReference type="PaxDb" id="9031-ENSGALP00000005067"/>
<dbReference type="GeneID" id="417159"/>
<dbReference type="KEGG" id="gga:417159"/>
<dbReference type="CTD" id="6837"/>
<dbReference type="VEuPathDB" id="HostDB:geneid_417159"/>
<dbReference type="eggNOG" id="KOG3304">
    <property type="taxonomic scope" value="Eukaryota"/>
</dbReference>
<dbReference type="HOGENOM" id="CLU_117242_0_0_1"/>
<dbReference type="InParanoid" id="Q800L3"/>
<dbReference type="OMA" id="KQAECDQ"/>
<dbReference type="OrthoDB" id="203279at2759"/>
<dbReference type="PhylomeDB" id="Q800L3"/>
<dbReference type="TreeFam" id="TF323390"/>
<dbReference type="PRO" id="PR:Q800L3"/>
<dbReference type="Proteomes" id="UP000000539">
    <property type="component" value="Chromosome 17"/>
</dbReference>
<dbReference type="Bgee" id="ENSGALG00000003204">
    <property type="expression patterns" value="Expressed in spleen and 13 other cell types or tissues"/>
</dbReference>
<dbReference type="GO" id="GO:0016592">
    <property type="term" value="C:mediator complex"/>
    <property type="evidence" value="ECO:0000318"/>
    <property type="project" value="GO_Central"/>
</dbReference>
<dbReference type="GO" id="GO:0003712">
    <property type="term" value="F:transcription coregulator activity"/>
    <property type="evidence" value="ECO:0007669"/>
    <property type="project" value="InterPro"/>
</dbReference>
<dbReference type="GO" id="GO:0006357">
    <property type="term" value="P:regulation of transcription by RNA polymerase II"/>
    <property type="evidence" value="ECO:0007669"/>
    <property type="project" value="InterPro"/>
</dbReference>
<dbReference type="InterPro" id="IPR009332">
    <property type="entry name" value="Med22"/>
</dbReference>
<dbReference type="PANTHER" id="PTHR12434">
    <property type="entry name" value="MEDIATOR OF RNA POLYMERASE II TRANSCRIPTION SUBUNIT 22"/>
    <property type="match status" value="1"/>
</dbReference>
<dbReference type="PANTHER" id="PTHR12434:SF6">
    <property type="entry name" value="MEDIATOR OF RNA POLYMERASE II TRANSCRIPTION SUBUNIT 22"/>
    <property type="match status" value="1"/>
</dbReference>
<dbReference type="Pfam" id="PF06179">
    <property type="entry name" value="Med22"/>
    <property type="match status" value="1"/>
</dbReference>
<sequence>MAQQRVLPQSKETLLQSYNKRLKDDVKSIMDNFTEIIKTAKIEDETQVSRATQSEQDNYEMHVRAANIVRAGESLMKLVSDLKQFLILNDFPSVNEAINQRNQQLRSLQEECDKKLIALRDEISIDLYELEEEYYSSSYSLCDSNDLPLCEAYWREDFDMPSPESLSMPLTTATAEQSIATSQSSTPSHPHVNGHGAGPTDHS</sequence>
<name>MED22_CHICK</name>
<evidence type="ECO:0000250" key="1"/>
<evidence type="ECO:0000255" key="2"/>
<evidence type="ECO:0000256" key="3">
    <source>
        <dbReference type="SAM" id="MobiDB-lite"/>
    </source>
</evidence>
<evidence type="ECO:0000269" key="4">
    <source ref="1"/>
</evidence>
<evidence type="ECO:0000303" key="5">
    <source ref="1"/>
</evidence>
<evidence type="ECO:0000305" key="6"/>
<evidence type="ECO:0000312" key="7">
    <source>
        <dbReference type="EMBL" id="BAC65167.1"/>
    </source>
</evidence>
<gene>
    <name type="primary">MED22</name>
    <name type="synonym">SURF5</name>
</gene>
<accession>Q800L3</accession>
<accession>Q800L2</accession>
<comment type="function">
    <text evidence="1">Component of the Mediator complex, a coactivator involved in the regulated transcription of nearly all RNA polymerase II-dependent genes. Mediator functions as a bridge to convey information from gene-specific regulatory proteins to the basal RNA polymerase II transcription machinery. Mediator is recruited to promoters by direct interactions with regulatory proteins and serves as a scaffold for the assembly of a functional preinitiation complex with RNA polymerase II and the general transcription factors (By similarity).</text>
</comment>
<comment type="subunit">
    <text evidence="1">Component of the Mediator complex.</text>
</comment>
<comment type="subcellular location">
    <subcellularLocation>
        <location evidence="6">Nucleus</location>
    </subcellularLocation>
</comment>
<comment type="alternative products">
    <event type="alternative splicing"/>
    <isoform>
        <id>Q800L3-1</id>
        <name evidence="4">1</name>
        <name>Surf5B</name>
        <sequence type="displayed"/>
    </isoform>
    <isoform>
        <id>Q800L3-2</id>
        <name evidence="4">2</name>
        <name>Surf5A</name>
        <sequence type="described" ref="VSP_052316 VSP_052317"/>
    </isoform>
</comment>
<comment type="similarity">
    <text evidence="6">Belongs to the Mediator complex subunit 22 family.</text>
</comment>
<organism>
    <name type="scientific">Gallus gallus</name>
    <name type="common">Chicken</name>
    <dbReference type="NCBI Taxonomy" id="9031"/>
    <lineage>
        <taxon>Eukaryota</taxon>
        <taxon>Metazoa</taxon>
        <taxon>Chordata</taxon>
        <taxon>Craniata</taxon>
        <taxon>Vertebrata</taxon>
        <taxon>Euteleostomi</taxon>
        <taxon>Archelosauria</taxon>
        <taxon>Archosauria</taxon>
        <taxon>Dinosauria</taxon>
        <taxon>Saurischia</taxon>
        <taxon>Theropoda</taxon>
        <taxon>Coelurosauria</taxon>
        <taxon>Aves</taxon>
        <taxon>Neognathae</taxon>
        <taxon>Galloanserae</taxon>
        <taxon>Galliformes</taxon>
        <taxon>Phasianidae</taxon>
        <taxon>Phasianinae</taxon>
        <taxon>Gallus</taxon>
    </lineage>
</organism>
<proteinExistence type="inferred from homology"/>
<reference evidence="7" key="1">
    <citation type="submission" date="2000-10" db="EMBL/GenBank/DDBJ databases">
        <title>The gene cluster containing ribosomal protein L7a gene of the chicken.</title>
        <authorList>
            <person name="Maeda N."/>
            <person name="Toku S."/>
            <person name="Kenmochi N."/>
            <person name="Tanaka T."/>
        </authorList>
    </citation>
    <scope>NUCLEOTIDE SEQUENCE [GENOMIC DNA]</scope>
    <scope>ALTERNATIVE SPLICING</scope>
    <source>
        <tissue evidence="7">Liver</tissue>
    </source>
</reference>